<feature type="chain" id="PRO_0000321742" description="Ribosome maturation factor RimM">
    <location>
        <begin position="1"/>
        <end position="166"/>
    </location>
</feature>
<feature type="domain" description="PRC barrel" evidence="1">
    <location>
        <begin position="90"/>
        <end position="163"/>
    </location>
</feature>
<reference key="1">
    <citation type="journal article" date="2006" name="Proc. Natl. Acad. Sci. U.S.A.">
        <title>Comparative genomics of the lactic acid bacteria.</title>
        <authorList>
            <person name="Makarova K.S."/>
            <person name="Slesarev A."/>
            <person name="Wolf Y.I."/>
            <person name="Sorokin A."/>
            <person name="Mirkin B."/>
            <person name="Koonin E.V."/>
            <person name="Pavlov A."/>
            <person name="Pavlova N."/>
            <person name="Karamychev V."/>
            <person name="Polouchine N."/>
            <person name="Shakhova V."/>
            <person name="Grigoriev I."/>
            <person name="Lou Y."/>
            <person name="Rohksar D."/>
            <person name="Lucas S."/>
            <person name="Huang K."/>
            <person name="Goodstein D.M."/>
            <person name="Hawkins T."/>
            <person name="Plengvidhya V."/>
            <person name="Welker D."/>
            <person name="Hughes J."/>
            <person name="Goh Y."/>
            <person name="Benson A."/>
            <person name="Baldwin K."/>
            <person name="Lee J.-H."/>
            <person name="Diaz-Muniz I."/>
            <person name="Dosti B."/>
            <person name="Smeianov V."/>
            <person name="Wechter W."/>
            <person name="Barabote R."/>
            <person name="Lorca G."/>
            <person name="Altermann E."/>
            <person name="Barrangou R."/>
            <person name="Ganesan B."/>
            <person name="Xie Y."/>
            <person name="Rawsthorne H."/>
            <person name="Tamir D."/>
            <person name="Parker C."/>
            <person name="Breidt F."/>
            <person name="Broadbent J.R."/>
            <person name="Hutkins R."/>
            <person name="O'Sullivan D."/>
            <person name="Steele J."/>
            <person name="Unlu G."/>
            <person name="Saier M.H. Jr."/>
            <person name="Klaenhammer T."/>
            <person name="Richardson P."/>
            <person name="Kozyavkin S."/>
            <person name="Weimer B.C."/>
            <person name="Mills D.A."/>
        </authorList>
    </citation>
    <scope>NUCLEOTIDE SEQUENCE [LARGE SCALE GENOMIC DNA]</scope>
    <source>
        <strain>ATCC BAA-331 / PSU-1</strain>
    </source>
</reference>
<organism>
    <name type="scientific">Oenococcus oeni (strain ATCC BAA-331 / PSU-1)</name>
    <dbReference type="NCBI Taxonomy" id="203123"/>
    <lineage>
        <taxon>Bacteria</taxon>
        <taxon>Bacillati</taxon>
        <taxon>Bacillota</taxon>
        <taxon>Bacilli</taxon>
        <taxon>Lactobacillales</taxon>
        <taxon>Lactobacillaceae</taxon>
        <taxon>Oenococcus</taxon>
    </lineage>
</organism>
<proteinExistence type="inferred from homology"/>
<keyword id="KW-0143">Chaperone</keyword>
<keyword id="KW-0963">Cytoplasm</keyword>
<keyword id="KW-1185">Reference proteome</keyword>
<keyword id="KW-0690">Ribosome biogenesis</keyword>
<keyword id="KW-0698">rRNA processing</keyword>
<accession>Q04FP6</accession>
<protein>
    <recommendedName>
        <fullName evidence="1">Ribosome maturation factor RimM</fullName>
    </recommendedName>
</protein>
<evidence type="ECO:0000255" key="1">
    <source>
        <dbReference type="HAMAP-Rule" id="MF_00014"/>
    </source>
</evidence>
<dbReference type="EMBL" id="CP000411">
    <property type="protein sequence ID" value="ABJ56726.1"/>
    <property type="molecule type" value="Genomic_DNA"/>
</dbReference>
<dbReference type="RefSeq" id="WP_002818686.1">
    <property type="nucleotide sequence ID" value="NC_008528.1"/>
</dbReference>
<dbReference type="SMR" id="Q04FP6"/>
<dbReference type="STRING" id="203123.OEOE_0800"/>
<dbReference type="GeneID" id="75066124"/>
<dbReference type="KEGG" id="ooe:OEOE_0800"/>
<dbReference type="eggNOG" id="COG0806">
    <property type="taxonomic scope" value="Bacteria"/>
</dbReference>
<dbReference type="HOGENOM" id="CLU_077636_3_1_9"/>
<dbReference type="Proteomes" id="UP000000774">
    <property type="component" value="Chromosome"/>
</dbReference>
<dbReference type="GO" id="GO:0005737">
    <property type="term" value="C:cytoplasm"/>
    <property type="evidence" value="ECO:0007669"/>
    <property type="project" value="UniProtKB-SubCell"/>
</dbReference>
<dbReference type="GO" id="GO:0005840">
    <property type="term" value="C:ribosome"/>
    <property type="evidence" value="ECO:0007669"/>
    <property type="project" value="InterPro"/>
</dbReference>
<dbReference type="GO" id="GO:0043022">
    <property type="term" value="F:ribosome binding"/>
    <property type="evidence" value="ECO:0007669"/>
    <property type="project" value="InterPro"/>
</dbReference>
<dbReference type="GO" id="GO:0042274">
    <property type="term" value="P:ribosomal small subunit biogenesis"/>
    <property type="evidence" value="ECO:0007669"/>
    <property type="project" value="UniProtKB-UniRule"/>
</dbReference>
<dbReference type="GO" id="GO:0006364">
    <property type="term" value="P:rRNA processing"/>
    <property type="evidence" value="ECO:0007669"/>
    <property type="project" value="UniProtKB-UniRule"/>
</dbReference>
<dbReference type="Gene3D" id="2.30.30.240">
    <property type="entry name" value="PRC-barrel domain"/>
    <property type="match status" value="1"/>
</dbReference>
<dbReference type="Gene3D" id="2.40.30.60">
    <property type="entry name" value="RimM"/>
    <property type="match status" value="1"/>
</dbReference>
<dbReference type="HAMAP" id="MF_00014">
    <property type="entry name" value="Ribosome_mat_RimM"/>
    <property type="match status" value="1"/>
</dbReference>
<dbReference type="InterPro" id="IPR011033">
    <property type="entry name" value="PRC_barrel-like_sf"/>
</dbReference>
<dbReference type="InterPro" id="IPR056792">
    <property type="entry name" value="PRC_RimM"/>
</dbReference>
<dbReference type="InterPro" id="IPR011961">
    <property type="entry name" value="RimM"/>
</dbReference>
<dbReference type="InterPro" id="IPR002676">
    <property type="entry name" value="RimM_N"/>
</dbReference>
<dbReference type="InterPro" id="IPR036976">
    <property type="entry name" value="RimM_N_sf"/>
</dbReference>
<dbReference type="InterPro" id="IPR009000">
    <property type="entry name" value="Transl_B-barrel_sf"/>
</dbReference>
<dbReference type="NCBIfam" id="TIGR02273">
    <property type="entry name" value="16S_RimM"/>
    <property type="match status" value="1"/>
</dbReference>
<dbReference type="PANTHER" id="PTHR33692">
    <property type="entry name" value="RIBOSOME MATURATION FACTOR RIMM"/>
    <property type="match status" value="1"/>
</dbReference>
<dbReference type="PANTHER" id="PTHR33692:SF1">
    <property type="entry name" value="RIBOSOME MATURATION FACTOR RIMM"/>
    <property type="match status" value="1"/>
</dbReference>
<dbReference type="Pfam" id="PF24986">
    <property type="entry name" value="PRC_RimM"/>
    <property type="match status" value="1"/>
</dbReference>
<dbReference type="Pfam" id="PF01782">
    <property type="entry name" value="RimM"/>
    <property type="match status" value="1"/>
</dbReference>
<dbReference type="SUPFAM" id="SSF50346">
    <property type="entry name" value="PRC-barrel domain"/>
    <property type="match status" value="1"/>
</dbReference>
<dbReference type="SUPFAM" id="SSF50447">
    <property type="entry name" value="Translation proteins"/>
    <property type="match status" value="1"/>
</dbReference>
<gene>
    <name evidence="1" type="primary">rimM</name>
    <name type="ordered locus">OEOE_0800</name>
</gene>
<comment type="function">
    <text evidence="1">An accessory protein needed during the final step in the assembly of 30S ribosomal subunit, possibly for assembly of the head region. Essential for efficient processing of 16S rRNA. May be needed both before and after RbfA during the maturation of 16S rRNA. It has affinity for free ribosomal 30S subunits but not for 70S ribosomes.</text>
</comment>
<comment type="subunit">
    <text evidence="1">Binds ribosomal protein uS19.</text>
</comment>
<comment type="subcellular location">
    <subcellularLocation>
        <location evidence="1">Cytoplasm</location>
    </subcellularLocation>
</comment>
<comment type="domain">
    <text evidence="1">The PRC barrel domain binds ribosomal protein uS19.</text>
</comment>
<comment type="similarity">
    <text evidence="1">Belongs to the RimM family.</text>
</comment>
<name>RIMM_OENOB</name>
<sequence>MKELRIGRVINTHGIAGELKIDFNTDFPEQRFAKNSELLIAGEKLVVQSSRPFKQFWLVKFSDHENINLVEKYKGEDIFINERKEPRLSEGEFLVSQIIGLKVIDEKGNSIGEIADSFHTGANDVWTIKKSNGKEILIPYIDQVVKKVDLQTSTVTIELLEGLDED</sequence>